<feature type="chain" id="PRO_0000099725" description="Uncharacterized protein FPV007/FPV254">
    <location>
        <begin position="1"/>
        <end position="72"/>
    </location>
</feature>
<organismHost>
    <name type="scientific">Vertebrata</name>
    <dbReference type="NCBI Taxonomy" id="7742"/>
</organismHost>
<name>V007_FOWPN</name>
<gene>
    <name type="ordered locus">FPV007</name>
</gene>
<gene>
    <name type="ordered locus">FPV254</name>
</gene>
<protein>
    <recommendedName>
        <fullName>Uncharacterized protein FPV007/FPV254</fullName>
    </recommendedName>
</protein>
<sequence>MLYSVFTRIYKIRKNNKTEMILAIYDRNAYIVKKTGIGSILLRDNGTRNTMLNIIYDTSSRNMQMVLRVSVL</sequence>
<reference key="1">
    <citation type="journal article" date="2000" name="J. Virol.">
        <title>The genome of fowlpox virus.</title>
        <authorList>
            <person name="Afonso C.L."/>
            <person name="Tulman E.R."/>
            <person name="Lu Z."/>
            <person name="Zsak L."/>
            <person name="Kutish G.F."/>
            <person name="Rock D.L."/>
        </authorList>
    </citation>
    <scope>NUCLEOTIDE SEQUENCE [LARGE SCALE GENOMIC DNA]</scope>
</reference>
<dbReference type="EMBL" id="AF198100">
    <property type="protein sequence ID" value="AAF44600.1"/>
    <property type="molecule type" value="Genomic_DNA"/>
</dbReference>
<dbReference type="EMBL" id="AF198100">
    <property type="protein sequence ID" value="AAF44609.1"/>
    <property type="molecule type" value="Genomic_DNA"/>
</dbReference>
<dbReference type="RefSeq" id="NP_038970.1">
    <property type="nucleotide sequence ID" value="NC_002188.1"/>
</dbReference>
<dbReference type="RefSeq" id="NP_039217.1">
    <property type="nucleotide sequence ID" value="NC_002188.1"/>
</dbReference>
<dbReference type="GeneID" id="1486828"/>
<dbReference type="GeneID" id="1486837"/>
<dbReference type="KEGG" id="vg:1486828"/>
<dbReference type="KEGG" id="vg:1486837"/>
<dbReference type="Proteomes" id="UP000008597">
    <property type="component" value="Segment"/>
</dbReference>
<accession>Q9ICF7</accession>
<proteinExistence type="predicted"/>
<keyword id="KW-1185">Reference proteome</keyword>
<organism>
    <name type="scientific">Fowlpox virus (strain NVSL)</name>
    <name type="common">FPV</name>
    <dbReference type="NCBI Taxonomy" id="928301"/>
    <lineage>
        <taxon>Viruses</taxon>
        <taxon>Varidnaviria</taxon>
        <taxon>Bamfordvirae</taxon>
        <taxon>Nucleocytoviricota</taxon>
        <taxon>Pokkesviricetes</taxon>
        <taxon>Chitovirales</taxon>
        <taxon>Poxviridae</taxon>
        <taxon>Chordopoxvirinae</taxon>
        <taxon>Avipoxvirus</taxon>
        <taxon>Fowlpox virus</taxon>
    </lineage>
</organism>